<gene>
    <name type="primary">PRE6</name>
    <name type="synonym">BHLH163</name>
    <name type="synonym">KDR</name>
    <name type="ordered locus">At1g26945</name>
    <name type="ORF">T2P11</name>
</gene>
<feature type="chain" id="PRO_0000429087" description="Transcription factor PRE6">
    <location>
        <begin position="1"/>
        <end position="94"/>
    </location>
</feature>
<feature type="domain" description="bHLH" evidence="1">
    <location>
        <begin position="6"/>
        <end position="60"/>
    </location>
</feature>
<feature type="region of interest" description="Disordered" evidence="2">
    <location>
        <begin position="1"/>
        <end position="20"/>
    </location>
</feature>
<reference key="1">
    <citation type="journal article" date="2000" name="Nature">
        <title>Sequence and analysis of chromosome 1 of the plant Arabidopsis thaliana.</title>
        <authorList>
            <person name="Theologis A."/>
            <person name="Ecker J.R."/>
            <person name="Palm C.J."/>
            <person name="Federspiel N.A."/>
            <person name="Kaul S."/>
            <person name="White O."/>
            <person name="Alonso J."/>
            <person name="Altafi H."/>
            <person name="Araujo R."/>
            <person name="Bowman C.L."/>
            <person name="Brooks S.Y."/>
            <person name="Buehler E."/>
            <person name="Chan A."/>
            <person name="Chao Q."/>
            <person name="Chen H."/>
            <person name="Cheuk R.F."/>
            <person name="Chin C.W."/>
            <person name="Chung M.K."/>
            <person name="Conn L."/>
            <person name="Conway A.B."/>
            <person name="Conway A.R."/>
            <person name="Creasy T.H."/>
            <person name="Dewar K."/>
            <person name="Dunn P."/>
            <person name="Etgu P."/>
            <person name="Feldblyum T.V."/>
            <person name="Feng J.-D."/>
            <person name="Fong B."/>
            <person name="Fujii C.Y."/>
            <person name="Gill J.E."/>
            <person name="Goldsmith A.D."/>
            <person name="Haas B."/>
            <person name="Hansen N.F."/>
            <person name="Hughes B."/>
            <person name="Huizar L."/>
            <person name="Hunter J.L."/>
            <person name="Jenkins J."/>
            <person name="Johnson-Hopson C."/>
            <person name="Khan S."/>
            <person name="Khaykin E."/>
            <person name="Kim C.J."/>
            <person name="Koo H.L."/>
            <person name="Kremenetskaia I."/>
            <person name="Kurtz D.B."/>
            <person name="Kwan A."/>
            <person name="Lam B."/>
            <person name="Langin-Hooper S."/>
            <person name="Lee A."/>
            <person name="Lee J.M."/>
            <person name="Lenz C.A."/>
            <person name="Li J.H."/>
            <person name="Li Y.-P."/>
            <person name="Lin X."/>
            <person name="Liu S.X."/>
            <person name="Liu Z.A."/>
            <person name="Luros J.S."/>
            <person name="Maiti R."/>
            <person name="Marziali A."/>
            <person name="Militscher J."/>
            <person name="Miranda M."/>
            <person name="Nguyen M."/>
            <person name="Nierman W.C."/>
            <person name="Osborne B.I."/>
            <person name="Pai G."/>
            <person name="Peterson J."/>
            <person name="Pham P.K."/>
            <person name="Rizzo M."/>
            <person name="Rooney T."/>
            <person name="Rowley D."/>
            <person name="Sakano H."/>
            <person name="Salzberg S.L."/>
            <person name="Schwartz J.R."/>
            <person name="Shinn P."/>
            <person name="Southwick A.M."/>
            <person name="Sun H."/>
            <person name="Tallon L.J."/>
            <person name="Tambunga G."/>
            <person name="Toriumi M.J."/>
            <person name="Town C.D."/>
            <person name="Utterback T."/>
            <person name="Van Aken S."/>
            <person name="Vaysberg M."/>
            <person name="Vysotskaia V.S."/>
            <person name="Walker M."/>
            <person name="Wu D."/>
            <person name="Yu G."/>
            <person name="Fraser C.M."/>
            <person name="Venter J.C."/>
            <person name="Davis R.W."/>
        </authorList>
    </citation>
    <scope>NUCLEOTIDE SEQUENCE [LARGE SCALE GENOMIC DNA]</scope>
    <source>
        <strain>cv. Columbia</strain>
    </source>
</reference>
<reference key="2">
    <citation type="journal article" date="2017" name="Plant J.">
        <title>Araport11: a complete reannotation of the Arabidopsis thaliana reference genome.</title>
        <authorList>
            <person name="Cheng C.Y."/>
            <person name="Krishnakumar V."/>
            <person name="Chan A.P."/>
            <person name="Thibaud-Nissen F."/>
            <person name="Schobel S."/>
            <person name="Town C.D."/>
        </authorList>
    </citation>
    <scope>GENOME REANNOTATION</scope>
    <source>
        <strain>cv. Columbia</strain>
    </source>
</reference>
<reference key="3">
    <citation type="journal article" date="2002" name="Science">
        <title>Functional annotation of a full-length Arabidopsis cDNA collection.</title>
        <authorList>
            <person name="Seki M."/>
            <person name="Narusaka M."/>
            <person name="Kamiya A."/>
            <person name="Ishida J."/>
            <person name="Satou M."/>
            <person name="Sakurai T."/>
            <person name="Nakajima M."/>
            <person name="Enju A."/>
            <person name="Akiyama K."/>
            <person name="Oono Y."/>
            <person name="Muramatsu M."/>
            <person name="Hayashizaki Y."/>
            <person name="Kawai J."/>
            <person name="Carninci P."/>
            <person name="Itoh M."/>
            <person name="Ishii Y."/>
            <person name="Arakawa T."/>
            <person name="Shibata K."/>
            <person name="Shinagawa A."/>
            <person name="Shinozaki K."/>
        </authorList>
    </citation>
    <scope>NUCLEOTIDE SEQUENCE [LARGE SCALE MRNA]</scope>
    <source>
        <strain>cv. Columbia</strain>
    </source>
</reference>
<reference key="4">
    <citation type="journal article" date="2003" name="Science">
        <title>Empirical analysis of transcriptional activity in the Arabidopsis genome.</title>
        <authorList>
            <person name="Yamada K."/>
            <person name="Lim J."/>
            <person name="Dale J.M."/>
            <person name="Chen H."/>
            <person name="Shinn P."/>
            <person name="Palm C.J."/>
            <person name="Southwick A.M."/>
            <person name="Wu H.C."/>
            <person name="Kim C.J."/>
            <person name="Nguyen M."/>
            <person name="Pham P.K."/>
            <person name="Cheuk R.F."/>
            <person name="Karlin-Newmann G."/>
            <person name="Liu S.X."/>
            <person name="Lam B."/>
            <person name="Sakano H."/>
            <person name="Wu T."/>
            <person name="Yu G."/>
            <person name="Miranda M."/>
            <person name="Quach H.L."/>
            <person name="Tripp M."/>
            <person name="Chang C.H."/>
            <person name="Lee J.M."/>
            <person name="Toriumi M.J."/>
            <person name="Chan M.M."/>
            <person name="Tang C.C."/>
            <person name="Onodera C.S."/>
            <person name="Deng J.M."/>
            <person name="Akiyama K."/>
            <person name="Ansari Y."/>
            <person name="Arakawa T."/>
            <person name="Banh J."/>
            <person name="Banno F."/>
            <person name="Bowser L."/>
            <person name="Brooks S.Y."/>
            <person name="Carninci P."/>
            <person name="Chao Q."/>
            <person name="Choy N."/>
            <person name="Enju A."/>
            <person name="Goldsmith A.D."/>
            <person name="Gurjal M."/>
            <person name="Hansen N.F."/>
            <person name="Hayashizaki Y."/>
            <person name="Johnson-Hopson C."/>
            <person name="Hsuan V.W."/>
            <person name="Iida K."/>
            <person name="Karnes M."/>
            <person name="Khan S."/>
            <person name="Koesema E."/>
            <person name="Ishida J."/>
            <person name="Jiang P.X."/>
            <person name="Jones T."/>
            <person name="Kawai J."/>
            <person name="Kamiya A."/>
            <person name="Meyers C."/>
            <person name="Nakajima M."/>
            <person name="Narusaka M."/>
            <person name="Seki M."/>
            <person name="Sakurai T."/>
            <person name="Satou M."/>
            <person name="Tamse R."/>
            <person name="Vaysberg M."/>
            <person name="Wallender E.K."/>
            <person name="Wong C."/>
            <person name="Yamamura Y."/>
            <person name="Yuan S."/>
            <person name="Shinozaki K."/>
            <person name="Davis R.W."/>
            <person name="Theologis A."/>
            <person name="Ecker J.R."/>
        </authorList>
    </citation>
    <scope>NUCLEOTIDE SEQUENCE [LARGE SCALE MRNA]</scope>
    <source>
        <strain>cv. Columbia</strain>
    </source>
</reference>
<reference key="5">
    <citation type="journal article" date="2006" name="Plant Mol. Biol.">
        <title>KIDARI, encoding a non-DNA binding bHLH protein, represses light signal transduction in Arabidopsis thaliana.</title>
        <authorList>
            <person name="Hyun Y."/>
            <person name="Lee I."/>
        </authorList>
    </citation>
    <scope>FUNCTION</scope>
    <scope>INTERACTION WITH HFR1</scope>
    <scope>INDUCTION</scope>
</reference>
<reference key="6">
    <citation type="journal article" date="2013" name="Mol. Cells">
        <title>A competitive peptide inhibitor KIDARI negatively regulates HFR1 by forming nonfunctional heterodimers in Arabidopsis photomorphogenesis.</title>
        <authorList>
            <person name="Hong S.Y."/>
            <person name="Seo P.J."/>
            <person name="Ryu J.Y."/>
            <person name="Cho S.H."/>
            <person name="Woo J.C."/>
            <person name="Park C.M."/>
        </authorList>
    </citation>
    <scope>FUNCTION</scope>
    <scope>INTERACTION WITH HFR1</scope>
    <scope>SUBCELLULAR LOCATION</scope>
</reference>
<proteinExistence type="evidence at protein level"/>
<organism>
    <name type="scientific">Arabidopsis thaliana</name>
    <name type="common">Mouse-ear cress</name>
    <dbReference type="NCBI Taxonomy" id="3702"/>
    <lineage>
        <taxon>Eukaryota</taxon>
        <taxon>Viridiplantae</taxon>
        <taxon>Streptophyta</taxon>
        <taxon>Embryophyta</taxon>
        <taxon>Tracheophyta</taxon>
        <taxon>Spermatophyta</taxon>
        <taxon>Magnoliopsida</taxon>
        <taxon>eudicotyledons</taxon>
        <taxon>Gunneridae</taxon>
        <taxon>Pentapetalae</taxon>
        <taxon>rosids</taxon>
        <taxon>malvids</taxon>
        <taxon>Brassicales</taxon>
        <taxon>Brassicaceae</taxon>
        <taxon>Camelineae</taxon>
        <taxon>Arabidopsis</taxon>
    </lineage>
</organism>
<evidence type="ECO:0000255" key="1">
    <source>
        <dbReference type="PROSITE-ProRule" id="PRU00981"/>
    </source>
</evidence>
<evidence type="ECO:0000256" key="2">
    <source>
        <dbReference type="SAM" id="MobiDB-lite"/>
    </source>
</evidence>
<evidence type="ECO:0000269" key="3">
    <source>
    </source>
</evidence>
<evidence type="ECO:0000269" key="4">
    <source>
    </source>
</evidence>
<evidence type="ECO:0000305" key="5"/>
<evidence type="ECO:0000305" key="6">
    <source>
    </source>
</evidence>
<sequence length="94" mass="10718">MSSRRSSRSRQSGSSRISDDQISDLVSKLQHLIPELRRRRSDKVSASKVLQETCNYIRNLHREVDDLSDRLSELLASTDDNSAEAAIIRSLLNY</sequence>
<name>PRE6_ARATH</name>
<dbReference type="EMBL" id="AC005508">
    <property type="status" value="NOT_ANNOTATED_CDS"/>
    <property type="molecule type" value="Genomic_DNA"/>
</dbReference>
<dbReference type="EMBL" id="CP002684">
    <property type="protein sequence ID" value="AEE30763.1"/>
    <property type="molecule type" value="Genomic_DNA"/>
</dbReference>
<dbReference type="EMBL" id="AK119110">
    <property type="protein sequence ID" value="BAC43682.1"/>
    <property type="molecule type" value="mRNA"/>
</dbReference>
<dbReference type="EMBL" id="BT004686">
    <property type="protein sequence ID" value="AAO42932.1"/>
    <property type="molecule type" value="mRNA"/>
</dbReference>
<dbReference type="RefSeq" id="NP_849712.1">
    <property type="nucleotide sequence ID" value="NM_179381.3"/>
</dbReference>
<dbReference type="SMR" id="Q8GW32"/>
<dbReference type="BioGRID" id="24820">
    <property type="interactions" value="6"/>
</dbReference>
<dbReference type="FunCoup" id="Q8GW32">
    <property type="interactions" value="324"/>
</dbReference>
<dbReference type="IntAct" id="Q8GW32">
    <property type="interactions" value="6"/>
</dbReference>
<dbReference type="STRING" id="3702.Q8GW32"/>
<dbReference type="PaxDb" id="3702-AT1G26945.1"/>
<dbReference type="ProteomicsDB" id="236600"/>
<dbReference type="EnsemblPlants" id="AT1G26945.1">
    <property type="protein sequence ID" value="AT1G26945.1"/>
    <property type="gene ID" value="AT1G26945"/>
</dbReference>
<dbReference type="GeneID" id="839585"/>
<dbReference type="Gramene" id="AT1G26945.1">
    <property type="protein sequence ID" value="AT1G26945.1"/>
    <property type="gene ID" value="AT1G26945"/>
</dbReference>
<dbReference type="KEGG" id="ath:AT1G26945"/>
<dbReference type="Araport" id="AT1G26945"/>
<dbReference type="TAIR" id="AT1G26945">
    <property type="gene designation" value="KDR"/>
</dbReference>
<dbReference type="eggNOG" id="ENOG502S4KP">
    <property type="taxonomic scope" value="Eukaryota"/>
</dbReference>
<dbReference type="HOGENOM" id="CLU_183267_0_0_1"/>
<dbReference type="InParanoid" id="Q8GW32"/>
<dbReference type="OMA" id="NIHTTHS"/>
<dbReference type="OrthoDB" id="988630at2759"/>
<dbReference type="PhylomeDB" id="Q8GW32"/>
<dbReference type="PRO" id="PR:Q8GW32"/>
<dbReference type="Proteomes" id="UP000006548">
    <property type="component" value="Chromosome 1"/>
</dbReference>
<dbReference type="ExpressionAtlas" id="Q8GW32">
    <property type="expression patterns" value="baseline and differential"/>
</dbReference>
<dbReference type="GO" id="GO:0005737">
    <property type="term" value="C:cytoplasm"/>
    <property type="evidence" value="ECO:0007669"/>
    <property type="project" value="UniProtKB-SubCell"/>
</dbReference>
<dbReference type="GO" id="GO:0005634">
    <property type="term" value="C:nucleus"/>
    <property type="evidence" value="ECO:0007669"/>
    <property type="project" value="UniProtKB-SubCell"/>
</dbReference>
<dbReference type="GO" id="GO:0046983">
    <property type="term" value="F:protein dimerization activity"/>
    <property type="evidence" value="ECO:0007669"/>
    <property type="project" value="InterPro"/>
</dbReference>
<dbReference type="GO" id="GO:0006355">
    <property type="term" value="P:regulation of DNA-templated transcription"/>
    <property type="evidence" value="ECO:0007669"/>
    <property type="project" value="InterPro"/>
</dbReference>
<dbReference type="GO" id="GO:0040008">
    <property type="term" value="P:regulation of growth"/>
    <property type="evidence" value="ECO:0007669"/>
    <property type="project" value="InterPro"/>
</dbReference>
<dbReference type="GO" id="GO:0009416">
    <property type="term" value="P:response to light stimulus"/>
    <property type="evidence" value="ECO:0000315"/>
    <property type="project" value="TAIR"/>
</dbReference>
<dbReference type="CDD" id="cd11442">
    <property type="entry name" value="bHLH_AtPRE_like"/>
    <property type="match status" value="1"/>
</dbReference>
<dbReference type="FunFam" id="4.10.280.10:FF:000082">
    <property type="entry name" value="Transcription factor ILI6"/>
    <property type="match status" value="1"/>
</dbReference>
<dbReference type="Gene3D" id="4.10.280.10">
    <property type="entry name" value="Helix-loop-helix DNA-binding domain"/>
    <property type="match status" value="1"/>
</dbReference>
<dbReference type="InterPro" id="IPR011598">
    <property type="entry name" value="bHLH_dom"/>
</dbReference>
<dbReference type="InterPro" id="IPR036638">
    <property type="entry name" value="HLH_DNA-bd_sf"/>
</dbReference>
<dbReference type="InterPro" id="IPR044293">
    <property type="entry name" value="PRE"/>
</dbReference>
<dbReference type="PANTHER" id="PTHR46446">
    <property type="entry name" value="TRANSCRIPTION FACTOR PRE"/>
    <property type="match status" value="1"/>
</dbReference>
<dbReference type="PANTHER" id="PTHR46446:SF11">
    <property type="entry name" value="TRANSCRIPTION FACTOR PRE6"/>
    <property type="match status" value="1"/>
</dbReference>
<dbReference type="Pfam" id="PF23174">
    <property type="entry name" value="bHLH_ILI"/>
    <property type="match status" value="1"/>
</dbReference>
<dbReference type="SUPFAM" id="SSF47459">
    <property type="entry name" value="HLH, helix-loop-helix DNA-binding domain"/>
    <property type="match status" value="1"/>
</dbReference>
<dbReference type="PROSITE" id="PS50888">
    <property type="entry name" value="BHLH"/>
    <property type="match status" value="1"/>
</dbReference>
<comment type="function">
    <text evidence="3 4">Atypical and probable non DNA-binding bHLH transcription factor that regulates light-mediated responses in day light conditions by binding and inhibiting the activity of the bHLH transcription factor HFR1, a critical regulator of light signaling and shade avoidance. Forms non-functional heterodimers with HFR1, causing liberation and activation of PIF4 from the transcriptionally inactive HFR1-PIF4 complex.</text>
</comment>
<comment type="subunit">
    <text evidence="3 4">Interacts with HFR1.</text>
</comment>
<comment type="subcellular location">
    <subcellularLocation>
        <location evidence="4">Cytoplasm</location>
    </subcellularLocation>
    <subcellularLocation>
        <location evidence="1 4">Nucleus</location>
    </subcellularLocation>
</comment>
<comment type="induction">
    <text evidence="3">Circadian regulation with a peak of expression at midday.</text>
</comment>
<comment type="miscellaneous">
    <text evidence="6">Gain-of-function mutants kdr-D (T-DNA tagging) show long hypocotyls, pale green and slightly narrow leaves, elongated petioles and early flowering. They are not sensitive to the gibberellin inhibitor paclobutrazol during seed germination (PubMed:16786307).</text>
</comment>
<comment type="similarity">
    <text evidence="5">Belongs to the bHLH protein family.</text>
</comment>
<protein>
    <recommendedName>
        <fullName>Transcription factor PRE6</fullName>
    </recommendedName>
    <alternativeName>
        <fullName>Basic helix-loop-helix protein 163</fullName>
        <shortName>AtbHLH163</shortName>
        <shortName>bHLH 163</shortName>
    </alternativeName>
    <alternativeName>
        <fullName>Protein KIDARI</fullName>
    </alternativeName>
    <alternativeName>
        <fullName>Protein PACLOBUTRAZOL RESISTANCE 6</fullName>
    </alternativeName>
    <alternativeName>
        <fullName>bHLH transcription factor bHLH163</fullName>
    </alternativeName>
</protein>
<keyword id="KW-0963">Cytoplasm</keyword>
<keyword id="KW-0341">Growth regulation</keyword>
<keyword id="KW-0539">Nucleus</keyword>
<keyword id="KW-1185">Reference proteome</keyword>
<keyword id="KW-0804">Transcription</keyword>
<keyword id="KW-0805">Transcription regulation</keyword>
<accession>Q8GW32</accession>